<keyword id="KW-0030">Aminoacyl-tRNA synthetase</keyword>
<keyword id="KW-0067">ATP-binding</keyword>
<keyword id="KW-0963">Cytoplasm</keyword>
<keyword id="KW-0436">Ligase</keyword>
<keyword id="KW-0547">Nucleotide-binding</keyword>
<keyword id="KW-0648">Protein biosynthesis</keyword>
<keyword id="KW-1185">Reference proteome</keyword>
<accession>Q7VZ05</accession>
<dbReference type="EC" id="6.1.1.2" evidence="1"/>
<dbReference type="EMBL" id="BX640414">
    <property type="protein sequence ID" value="CAE41440.1"/>
    <property type="molecule type" value="Genomic_DNA"/>
</dbReference>
<dbReference type="RefSeq" id="NP_879919.1">
    <property type="nucleotide sequence ID" value="NC_002929.2"/>
</dbReference>
<dbReference type="RefSeq" id="WP_010930211.1">
    <property type="nucleotide sequence ID" value="NZ_CP039022.1"/>
</dbReference>
<dbReference type="SMR" id="Q7VZ05"/>
<dbReference type="STRING" id="257313.BP1143"/>
<dbReference type="PaxDb" id="257313-BP1143"/>
<dbReference type="KEGG" id="bpe:BP1143"/>
<dbReference type="PATRIC" id="fig|257313.5.peg.1227"/>
<dbReference type="eggNOG" id="COG0180">
    <property type="taxonomic scope" value="Bacteria"/>
</dbReference>
<dbReference type="HOGENOM" id="CLU_029244_5_1_4"/>
<dbReference type="Proteomes" id="UP000002676">
    <property type="component" value="Chromosome"/>
</dbReference>
<dbReference type="GO" id="GO:0005829">
    <property type="term" value="C:cytosol"/>
    <property type="evidence" value="ECO:0007669"/>
    <property type="project" value="TreeGrafter"/>
</dbReference>
<dbReference type="GO" id="GO:0005524">
    <property type="term" value="F:ATP binding"/>
    <property type="evidence" value="ECO:0007669"/>
    <property type="project" value="UniProtKB-UniRule"/>
</dbReference>
<dbReference type="GO" id="GO:0004830">
    <property type="term" value="F:tryptophan-tRNA ligase activity"/>
    <property type="evidence" value="ECO:0007669"/>
    <property type="project" value="UniProtKB-UniRule"/>
</dbReference>
<dbReference type="GO" id="GO:0006436">
    <property type="term" value="P:tryptophanyl-tRNA aminoacylation"/>
    <property type="evidence" value="ECO:0007669"/>
    <property type="project" value="UniProtKB-UniRule"/>
</dbReference>
<dbReference type="CDD" id="cd00806">
    <property type="entry name" value="TrpRS_core"/>
    <property type="match status" value="1"/>
</dbReference>
<dbReference type="FunFam" id="1.10.240.10:FF:000005">
    <property type="entry name" value="Tryptophan--tRNA ligase"/>
    <property type="match status" value="1"/>
</dbReference>
<dbReference type="FunFam" id="3.40.50.620:FF:000144">
    <property type="entry name" value="Tryptophan--tRNA ligase"/>
    <property type="match status" value="1"/>
</dbReference>
<dbReference type="Gene3D" id="2.30.29.80">
    <property type="match status" value="1"/>
</dbReference>
<dbReference type="Gene3D" id="3.40.50.620">
    <property type="entry name" value="HUPs"/>
    <property type="match status" value="1"/>
</dbReference>
<dbReference type="Gene3D" id="1.10.240.10">
    <property type="entry name" value="Tyrosyl-Transfer RNA Synthetase"/>
    <property type="match status" value="1"/>
</dbReference>
<dbReference type="HAMAP" id="MF_00140_B">
    <property type="entry name" value="Trp_tRNA_synth_B"/>
    <property type="match status" value="1"/>
</dbReference>
<dbReference type="InterPro" id="IPR002305">
    <property type="entry name" value="aa-tRNA-synth_Ic"/>
</dbReference>
<dbReference type="InterPro" id="IPR014729">
    <property type="entry name" value="Rossmann-like_a/b/a_fold"/>
</dbReference>
<dbReference type="InterPro" id="IPR002306">
    <property type="entry name" value="Trp-tRNA-ligase"/>
</dbReference>
<dbReference type="InterPro" id="IPR024109">
    <property type="entry name" value="Trp-tRNA-ligase_bac-type"/>
</dbReference>
<dbReference type="InterPro" id="IPR050203">
    <property type="entry name" value="Trp-tRNA_synthetase"/>
</dbReference>
<dbReference type="InterPro" id="IPR036913">
    <property type="entry name" value="YegP-like_sf"/>
</dbReference>
<dbReference type="NCBIfam" id="NF008923">
    <property type="entry name" value="PRK12284.1"/>
    <property type="match status" value="1"/>
</dbReference>
<dbReference type="NCBIfam" id="TIGR00233">
    <property type="entry name" value="trpS"/>
    <property type="match status" value="1"/>
</dbReference>
<dbReference type="PANTHER" id="PTHR43766">
    <property type="entry name" value="TRYPTOPHAN--TRNA LIGASE, MITOCHONDRIAL"/>
    <property type="match status" value="1"/>
</dbReference>
<dbReference type="PANTHER" id="PTHR43766:SF1">
    <property type="entry name" value="TRYPTOPHAN--TRNA LIGASE, MITOCHONDRIAL"/>
    <property type="match status" value="1"/>
</dbReference>
<dbReference type="Pfam" id="PF00579">
    <property type="entry name" value="tRNA-synt_1b"/>
    <property type="match status" value="1"/>
</dbReference>
<dbReference type="PRINTS" id="PR01039">
    <property type="entry name" value="TRNASYNTHTRP"/>
</dbReference>
<dbReference type="SUPFAM" id="SSF52374">
    <property type="entry name" value="Nucleotidylyl transferase"/>
    <property type="match status" value="1"/>
</dbReference>
<dbReference type="SUPFAM" id="SSF160113">
    <property type="entry name" value="YegP-like"/>
    <property type="match status" value="1"/>
</dbReference>
<organism>
    <name type="scientific">Bordetella pertussis (strain Tohama I / ATCC BAA-589 / NCTC 13251)</name>
    <dbReference type="NCBI Taxonomy" id="257313"/>
    <lineage>
        <taxon>Bacteria</taxon>
        <taxon>Pseudomonadati</taxon>
        <taxon>Pseudomonadota</taxon>
        <taxon>Betaproteobacteria</taxon>
        <taxon>Burkholderiales</taxon>
        <taxon>Alcaligenaceae</taxon>
        <taxon>Bordetella</taxon>
    </lineage>
</organism>
<name>SYW_BORPE</name>
<gene>
    <name evidence="1" type="primary">trpS</name>
    <name type="ordered locus">BP1143</name>
</gene>
<comment type="function">
    <text evidence="1">Catalyzes the attachment of tryptophan to tRNA(Trp).</text>
</comment>
<comment type="catalytic activity">
    <reaction evidence="1">
        <text>tRNA(Trp) + L-tryptophan + ATP = L-tryptophyl-tRNA(Trp) + AMP + diphosphate + H(+)</text>
        <dbReference type="Rhea" id="RHEA:24080"/>
        <dbReference type="Rhea" id="RHEA-COMP:9671"/>
        <dbReference type="Rhea" id="RHEA-COMP:9705"/>
        <dbReference type="ChEBI" id="CHEBI:15378"/>
        <dbReference type="ChEBI" id="CHEBI:30616"/>
        <dbReference type="ChEBI" id="CHEBI:33019"/>
        <dbReference type="ChEBI" id="CHEBI:57912"/>
        <dbReference type="ChEBI" id="CHEBI:78442"/>
        <dbReference type="ChEBI" id="CHEBI:78535"/>
        <dbReference type="ChEBI" id="CHEBI:456215"/>
        <dbReference type="EC" id="6.1.1.2"/>
    </reaction>
</comment>
<comment type="subunit">
    <text evidence="1">Homodimer.</text>
</comment>
<comment type="subcellular location">
    <subcellularLocation>
        <location evidence="1">Cytoplasm</location>
    </subcellularLocation>
</comment>
<comment type="similarity">
    <text evidence="1">Belongs to the class-I aminoacyl-tRNA synthetase family.</text>
</comment>
<evidence type="ECO:0000255" key="1">
    <source>
        <dbReference type="HAMAP-Rule" id="MF_00140"/>
    </source>
</evidence>
<sequence>MNTRVLTGITTTGTPHLGNYAGAIRPAIQASTQPGVDAFFFLADYHALIKCDDPARVARSRLELAATWLAAGLDPERVTFYRQSDIPEITELCWLLTCVTPKGLMNRAHAYKASVDQNAAKGVEPDDGVTMGLFSYPVLMAADILLFNANQVPVGRDQVQHLEMARDIAQRFNHLYGREFFVLPEVVIAEEVATLPGLDGRKMSKSYNNTIPLFEGGAAGLRNATQRIVTDSRLPGEPKDAEASHLYMLYRAFSTQQESMAFRRQLEEGMGWGDAKQALYERLERDLAPMRERYVELISNPGLIEDILQVGAAKARKLAQPLVRTLRDAVGLGVLQPAAAKAAQPARKAAKDARFVSFRDEDGSFRFRLLAADGEELLCSVPFANPKEAGALMRRLQDEAPEQALRGHDDVSYAAWLDGKEVAYGPQAADAGARDALLAKAREALAQLAAA</sequence>
<feature type="chain" id="PRO_0000136606" description="Tryptophan--tRNA ligase">
    <location>
        <begin position="1"/>
        <end position="451"/>
    </location>
</feature>
<feature type="short sequence motif" description="'HIGH' region" evidence="1">
    <location>
        <begin position="11"/>
        <end position="19"/>
    </location>
</feature>
<feature type="short sequence motif" description="'KMSKS' region" evidence="1">
    <location>
        <begin position="202"/>
        <end position="206"/>
    </location>
</feature>
<feature type="binding site" evidence="1">
    <location>
        <begin position="10"/>
        <end position="12"/>
    </location>
    <ligand>
        <name>ATP</name>
        <dbReference type="ChEBI" id="CHEBI:30616"/>
    </ligand>
</feature>
<feature type="binding site" evidence="1">
    <location>
        <begin position="18"/>
        <end position="19"/>
    </location>
    <ligand>
        <name>ATP</name>
        <dbReference type="ChEBI" id="CHEBI:30616"/>
    </ligand>
</feature>
<feature type="binding site" evidence="1">
    <location>
        <position position="143"/>
    </location>
    <ligand>
        <name>L-tryptophan</name>
        <dbReference type="ChEBI" id="CHEBI:57912"/>
    </ligand>
</feature>
<feature type="binding site" evidence="1">
    <location>
        <begin position="155"/>
        <end position="157"/>
    </location>
    <ligand>
        <name>ATP</name>
        <dbReference type="ChEBI" id="CHEBI:30616"/>
    </ligand>
</feature>
<feature type="binding site" evidence="1">
    <location>
        <position position="195"/>
    </location>
    <ligand>
        <name>ATP</name>
        <dbReference type="ChEBI" id="CHEBI:30616"/>
    </ligand>
</feature>
<feature type="binding site" evidence="1">
    <location>
        <begin position="202"/>
        <end position="206"/>
    </location>
    <ligand>
        <name>ATP</name>
        <dbReference type="ChEBI" id="CHEBI:30616"/>
    </ligand>
</feature>
<protein>
    <recommendedName>
        <fullName evidence="1">Tryptophan--tRNA ligase</fullName>
        <ecNumber evidence="1">6.1.1.2</ecNumber>
    </recommendedName>
    <alternativeName>
        <fullName evidence="1">Tryptophanyl-tRNA synthetase</fullName>
        <shortName evidence="1">TrpRS</shortName>
    </alternativeName>
</protein>
<reference key="1">
    <citation type="journal article" date="2003" name="Nat. Genet.">
        <title>Comparative analysis of the genome sequences of Bordetella pertussis, Bordetella parapertussis and Bordetella bronchiseptica.</title>
        <authorList>
            <person name="Parkhill J."/>
            <person name="Sebaihia M."/>
            <person name="Preston A."/>
            <person name="Murphy L.D."/>
            <person name="Thomson N.R."/>
            <person name="Harris D.E."/>
            <person name="Holden M.T.G."/>
            <person name="Churcher C.M."/>
            <person name="Bentley S.D."/>
            <person name="Mungall K.L."/>
            <person name="Cerdeno-Tarraga A.-M."/>
            <person name="Temple L."/>
            <person name="James K.D."/>
            <person name="Harris B."/>
            <person name="Quail M.A."/>
            <person name="Achtman M."/>
            <person name="Atkin R."/>
            <person name="Baker S."/>
            <person name="Basham D."/>
            <person name="Bason N."/>
            <person name="Cherevach I."/>
            <person name="Chillingworth T."/>
            <person name="Collins M."/>
            <person name="Cronin A."/>
            <person name="Davis P."/>
            <person name="Doggett J."/>
            <person name="Feltwell T."/>
            <person name="Goble A."/>
            <person name="Hamlin N."/>
            <person name="Hauser H."/>
            <person name="Holroyd S."/>
            <person name="Jagels K."/>
            <person name="Leather S."/>
            <person name="Moule S."/>
            <person name="Norberczak H."/>
            <person name="O'Neil S."/>
            <person name="Ormond D."/>
            <person name="Price C."/>
            <person name="Rabbinowitsch E."/>
            <person name="Rutter S."/>
            <person name="Sanders M."/>
            <person name="Saunders D."/>
            <person name="Seeger K."/>
            <person name="Sharp S."/>
            <person name="Simmonds M."/>
            <person name="Skelton J."/>
            <person name="Squares R."/>
            <person name="Squares S."/>
            <person name="Stevens K."/>
            <person name="Unwin L."/>
            <person name="Whitehead S."/>
            <person name="Barrell B.G."/>
            <person name="Maskell D.J."/>
        </authorList>
    </citation>
    <scope>NUCLEOTIDE SEQUENCE [LARGE SCALE GENOMIC DNA]</scope>
    <source>
        <strain>Tohama I / ATCC BAA-589 / NCTC 13251</strain>
    </source>
</reference>
<proteinExistence type="inferred from homology"/>